<gene>
    <name evidence="1" type="primary">aroK</name>
    <name type="ordered locus">Daro_0215</name>
</gene>
<organism>
    <name type="scientific">Dechloromonas aromatica (strain RCB)</name>
    <dbReference type="NCBI Taxonomy" id="159087"/>
    <lineage>
        <taxon>Bacteria</taxon>
        <taxon>Pseudomonadati</taxon>
        <taxon>Pseudomonadota</taxon>
        <taxon>Betaproteobacteria</taxon>
        <taxon>Rhodocyclales</taxon>
        <taxon>Azonexaceae</taxon>
        <taxon>Dechloromonas</taxon>
    </lineage>
</organism>
<dbReference type="EC" id="2.7.1.71" evidence="1"/>
<dbReference type="EMBL" id="CP000089">
    <property type="protein sequence ID" value="AAZ44974.1"/>
    <property type="molecule type" value="Genomic_DNA"/>
</dbReference>
<dbReference type="SMR" id="Q47JK7"/>
<dbReference type="STRING" id="159087.Daro_0215"/>
<dbReference type="KEGG" id="dar:Daro_0215"/>
<dbReference type="eggNOG" id="COG0703">
    <property type="taxonomic scope" value="Bacteria"/>
</dbReference>
<dbReference type="HOGENOM" id="CLU_057607_2_2_4"/>
<dbReference type="UniPathway" id="UPA00053">
    <property type="reaction ID" value="UER00088"/>
</dbReference>
<dbReference type="GO" id="GO:0005829">
    <property type="term" value="C:cytosol"/>
    <property type="evidence" value="ECO:0007669"/>
    <property type="project" value="TreeGrafter"/>
</dbReference>
<dbReference type="GO" id="GO:0005524">
    <property type="term" value="F:ATP binding"/>
    <property type="evidence" value="ECO:0007669"/>
    <property type="project" value="UniProtKB-UniRule"/>
</dbReference>
<dbReference type="GO" id="GO:0000287">
    <property type="term" value="F:magnesium ion binding"/>
    <property type="evidence" value="ECO:0007669"/>
    <property type="project" value="UniProtKB-UniRule"/>
</dbReference>
<dbReference type="GO" id="GO:0004765">
    <property type="term" value="F:shikimate kinase activity"/>
    <property type="evidence" value="ECO:0007669"/>
    <property type="project" value="UniProtKB-UniRule"/>
</dbReference>
<dbReference type="GO" id="GO:0008652">
    <property type="term" value="P:amino acid biosynthetic process"/>
    <property type="evidence" value="ECO:0007669"/>
    <property type="project" value="UniProtKB-KW"/>
</dbReference>
<dbReference type="GO" id="GO:0009073">
    <property type="term" value="P:aromatic amino acid family biosynthetic process"/>
    <property type="evidence" value="ECO:0007669"/>
    <property type="project" value="UniProtKB-KW"/>
</dbReference>
<dbReference type="GO" id="GO:0009423">
    <property type="term" value="P:chorismate biosynthetic process"/>
    <property type="evidence" value="ECO:0007669"/>
    <property type="project" value="UniProtKB-UniRule"/>
</dbReference>
<dbReference type="CDD" id="cd00464">
    <property type="entry name" value="SK"/>
    <property type="match status" value="1"/>
</dbReference>
<dbReference type="Gene3D" id="3.40.50.300">
    <property type="entry name" value="P-loop containing nucleotide triphosphate hydrolases"/>
    <property type="match status" value="1"/>
</dbReference>
<dbReference type="HAMAP" id="MF_00109">
    <property type="entry name" value="Shikimate_kinase"/>
    <property type="match status" value="1"/>
</dbReference>
<dbReference type="InterPro" id="IPR027417">
    <property type="entry name" value="P-loop_NTPase"/>
</dbReference>
<dbReference type="InterPro" id="IPR031322">
    <property type="entry name" value="Shikimate/glucono_kinase"/>
</dbReference>
<dbReference type="InterPro" id="IPR000623">
    <property type="entry name" value="Shikimate_kinase/TSH1"/>
</dbReference>
<dbReference type="InterPro" id="IPR023000">
    <property type="entry name" value="Shikimate_kinase_CS"/>
</dbReference>
<dbReference type="PANTHER" id="PTHR21087">
    <property type="entry name" value="SHIKIMATE KINASE"/>
    <property type="match status" value="1"/>
</dbReference>
<dbReference type="PANTHER" id="PTHR21087:SF16">
    <property type="entry name" value="SHIKIMATE KINASE 1, CHLOROPLASTIC"/>
    <property type="match status" value="1"/>
</dbReference>
<dbReference type="Pfam" id="PF01202">
    <property type="entry name" value="SKI"/>
    <property type="match status" value="1"/>
</dbReference>
<dbReference type="PRINTS" id="PR01100">
    <property type="entry name" value="SHIKIMTKNASE"/>
</dbReference>
<dbReference type="SUPFAM" id="SSF52540">
    <property type="entry name" value="P-loop containing nucleoside triphosphate hydrolases"/>
    <property type="match status" value="1"/>
</dbReference>
<dbReference type="PROSITE" id="PS01128">
    <property type="entry name" value="SHIKIMATE_KINASE"/>
    <property type="match status" value="1"/>
</dbReference>
<reference key="1">
    <citation type="journal article" date="2009" name="BMC Genomics">
        <title>Metabolic analysis of the soil microbe Dechloromonas aromatica str. RCB: indications of a surprisingly complex life-style and cryptic anaerobic pathways for aromatic degradation.</title>
        <authorList>
            <person name="Salinero K.K."/>
            <person name="Keller K."/>
            <person name="Feil W.S."/>
            <person name="Feil H."/>
            <person name="Trong S."/>
            <person name="Di Bartolo G."/>
            <person name="Lapidus A."/>
        </authorList>
    </citation>
    <scope>NUCLEOTIDE SEQUENCE [LARGE SCALE GENOMIC DNA]</scope>
    <source>
        <strain>RCB</strain>
    </source>
</reference>
<evidence type="ECO:0000255" key="1">
    <source>
        <dbReference type="HAMAP-Rule" id="MF_00109"/>
    </source>
</evidence>
<keyword id="KW-0028">Amino-acid biosynthesis</keyword>
<keyword id="KW-0057">Aromatic amino acid biosynthesis</keyword>
<keyword id="KW-0067">ATP-binding</keyword>
<keyword id="KW-0963">Cytoplasm</keyword>
<keyword id="KW-0418">Kinase</keyword>
<keyword id="KW-0460">Magnesium</keyword>
<keyword id="KW-0479">Metal-binding</keyword>
<keyword id="KW-0547">Nucleotide-binding</keyword>
<keyword id="KW-0808">Transferase</keyword>
<accession>Q47JK7</accession>
<protein>
    <recommendedName>
        <fullName evidence="1">Shikimate kinase</fullName>
        <shortName evidence="1">SK</shortName>
        <ecNumber evidence="1">2.7.1.71</ecNumber>
    </recommendedName>
</protein>
<name>AROK_DECAR</name>
<feature type="chain" id="PRO_0000237870" description="Shikimate kinase">
    <location>
        <begin position="1"/>
        <end position="183"/>
    </location>
</feature>
<feature type="binding site" evidence="1">
    <location>
        <begin position="25"/>
        <end position="30"/>
    </location>
    <ligand>
        <name>ATP</name>
        <dbReference type="ChEBI" id="CHEBI:30616"/>
    </ligand>
</feature>
<feature type="binding site" evidence="1">
    <location>
        <position position="29"/>
    </location>
    <ligand>
        <name>Mg(2+)</name>
        <dbReference type="ChEBI" id="CHEBI:18420"/>
    </ligand>
</feature>
<feature type="binding site" evidence="1">
    <location>
        <position position="47"/>
    </location>
    <ligand>
        <name>substrate</name>
    </ligand>
</feature>
<feature type="binding site" evidence="1">
    <location>
        <position position="71"/>
    </location>
    <ligand>
        <name>substrate</name>
    </ligand>
</feature>
<feature type="binding site" evidence="1">
    <location>
        <position position="93"/>
    </location>
    <ligand>
        <name>substrate</name>
    </ligand>
</feature>
<feature type="binding site" evidence="1">
    <location>
        <position position="131"/>
    </location>
    <ligand>
        <name>ATP</name>
        <dbReference type="ChEBI" id="CHEBI:30616"/>
    </ligand>
</feature>
<feature type="binding site" evidence="1">
    <location>
        <position position="150"/>
    </location>
    <ligand>
        <name>substrate</name>
    </ligand>
</feature>
<comment type="function">
    <text evidence="1">Catalyzes the specific phosphorylation of the 3-hydroxyl group of shikimic acid using ATP as a cosubstrate.</text>
</comment>
<comment type="catalytic activity">
    <reaction evidence="1">
        <text>shikimate + ATP = 3-phosphoshikimate + ADP + H(+)</text>
        <dbReference type="Rhea" id="RHEA:13121"/>
        <dbReference type="ChEBI" id="CHEBI:15378"/>
        <dbReference type="ChEBI" id="CHEBI:30616"/>
        <dbReference type="ChEBI" id="CHEBI:36208"/>
        <dbReference type="ChEBI" id="CHEBI:145989"/>
        <dbReference type="ChEBI" id="CHEBI:456216"/>
        <dbReference type="EC" id="2.7.1.71"/>
    </reaction>
</comment>
<comment type="cofactor">
    <cofactor evidence="1">
        <name>Mg(2+)</name>
        <dbReference type="ChEBI" id="CHEBI:18420"/>
    </cofactor>
    <text evidence="1">Binds 1 Mg(2+) ion per subunit.</text>
</comment>
<comment type="pathway">
    <text evidence="1">Metabolic intermediate biosynthesis; chorismate biosynthesis; chorismate from D-erythrose 4-phosphate and phosphoenolpyruvate: step 5/7.</text>
</comment>
<comment type="subunit">
    <text evidence="1">Monomer.</text>
</comment>
<comment type="subcellular location">
    <subcellularLocation>
        <location evidence="1">Cytoplasm</location>
    </subcellularLocation>
</comment>
<comment type="similarity">
    <text evidence="1">Belongs to the shikimate kinase family.</text>
</comment>
<sequence>MSTQDSAKITTVEHRRNIYLVGLMGAGKTTVGRQLARRLSRPFFDTDHEIVERTGVPIPTIFEIEGEEGFRRREAQTIYDLTAENNIVLATGGGVVINPENRRRLHDTGWVVYLNVSPVLLYERTRHDRNRPLLRVEDPLAKLEELHSIRDPLYREVAHIVVDGSHLVASGIVQYLLREFNRL</sequence>
<proteinExistence type="inferred from homology"/>